<dbReference type="EC" id="6.3.5.7" evidence="1"/>
<dbReference type="EMBL" id="CP000686">
    <property type="protein sequence ID" value="ABQ91312.1"/>
    <property type="molecule type" value="Genomic_DNA"/>
</dbReference>
<dbReference type="RefSeq" id="WP_011957656.1">
    <property type="nucleotide sequence ID" value="NC_009523.1"/>
</dbReference>
<dbReference type="SMR" id="A5UXF9"/>
<dbReference type="STRING" id="357808.RoseRS_2947"/>
<dbReference type="KEGG" id="rrs:RoseRS_2947"/>
<dbReference type="eggNOG" id="COG0154">
    <property type="taxonomic scope" value="Bacteria"/>
</dbReference>
<dbReference type="HOGENOM" id="CLU_009600_0_3_0"/>
<dbReference type="OrthoDB" id="9811471at2"/>
<dbReference type="Proteomes" id="UP000006554">
    <property type="component" value="Chromosome"/>
</dbReference>
<dbReference type="GO" id="GO:0030956">
    <property type="term" value="C:glutamyl-tRNA(Gln) amidotransferase complex"/>
    <property type="evidence" value="ECO:0007669"/>
    <property type="project" value="InterPro"/>
</dbReference>
<dbReference type="GO" id="GO:0005524">
    <property type="term" value="F:ATP binding"/>
    <property type="evidence" value="ECO:0007669"/>
    <property type="project" value="UniProtKB-KW"/>
</dbReference>
<dbReference type="GO" id="GO:0050567">
    <property type="term" value="F:glutaminyl-tRNA synthase (glutamine-hydrolyzing) activity"/>
    <property type="evidence" value="ECO:0007669"/>
    <property type="project" value="UniProtKB-UniRule"/>
</dbReference>
<dbReference type="GO" id="GO:0006412">
    <property type="term" value="P:translation"/>
    <property type="evidence" value="ECO:0007669"/>
    <property type="project" value="UniProtKB-UniRule"/>
</dbReference>
<dbReference type="Gene3D" id="3.90.1300.10">
    <property type="entry name" value="Amidase signature (AS) domain"/>
    <property type="match status" value="1"/>
</dbReference>
<dbReference type="HAMAP" id="MF_00120">
    <property type="entry name" value="GatA"/>
    <property type="match status" value="1"/>
</dbReference>
<dbReference type="InterPro" id="IPR000120">
    <property type="entry name" value="Amidase"/>
</dbReference>
<dbReference type="InterPro" id="IPR020556">
    <property type="entry name" value="Amidase_CS"/>
</dbReference>
<dbReference type="InterPro" id="IPR023631">
    <property type="entry name" value="Amidase_dom"/>
</dbReference>
<dbReference type="InterPro" id="IPR036928">
    <property type="entry name" value="AS_sf"/>
</dbReference>
<dbReference type="InterPro" id="IPR004412">
    <property type="entry name" value="GatA"/>
</dbReference>
<dbReference type="NCBIfam" id="TIGR00132">
    <property type="entry name" value="gatA"/>
    <property type="match status" value="1"/>
</dbReference>
<dbReference type="PANTHER" id="PTHR11895:SF151">
    <property type="entry name" value="GLUTAMYL-TRNA(GLN) AMIDOTRANSFERASE SUBUNIT A"/>
    <property type="match status" value="1"/>
</dbReference>
<dbReference type="PANTHER" id="PTHR11895">
    <property type="entry name" value="TRANSAMIDASE"/>
    <property type="match status" value="1"/>
</dbReference>
<dbReference type="Pfam" id="PF01425">
    <property type="entry name" value="Amidase"/>
    <property type="match status" value="1"/>
</dbReference>
<dbReference type="PIRSF" id="PIRSF001221">
    <property type="entry name" value="Amidase_fungi"/>
    <property type="match status" value="1"/>
</dbReference>
<dbReference type="SUPFAM" id="SSF75304">
    <property type="entry name" value="Amidase signature (AS) enzymes"/>
    <property type="match status" value="1"/>
</dbReference>
<dbReference type="PROSITE" id="PS00571">
    <property type="entry name" value="AMIDASES"/>
    <property type="match status" value="1"/>
</dbReference>
<protein>
    <recommendedName>
        <fullName evidence="1">Glutamyl-tRNA(Gln) amidotransferase subunit A</fullName>
        <shortName evidence="1">Glu-ADT subunit A</shortName>
        <ecNumber evidence="1">6.3.5.7</ecNumber>
    </recommendedName>
</protein>
<name>GATA_ROSS1</name>
<sequence length="487" mass="52086">MTLLHQLTLSDAREALMRGEITSVELTDALLARIAAVEPQVRAFLTIDAEGARAQAQAADARRAAGDTSPLLGIPLGIKDVISTQGVRTTCASKMLENYVPVYDATAVARLKAAGAVLIGKLNCDEFAMGSSTENSAFQQTRNPWNLERVPGGSSGGSAAAVAAGEAPATLGTDTGGSIRQPAALCGITGLKPTYGRVSRYGLVAFASSLDQIGPMARTVRDCAIILRVIAGADPFDATCTDHPVPDYEAALTGDIRGLRIGVPREYFVAGMQPEVESAVRVAIDVLRDQGAEVREISLPHTPYALPVYYLIAPAEASANLARFDGVRYGLRVPGESYFDELERTRGAGFGPEVRRRIMLGTYALSAGYYDAYYKRAQQVRTLIRRDYQQAFEQVDVIAAPTTPTVAFPIGAHSDDPLAMYLEDVCTLPLNLAGLPGLVVPCGFAAGLPIGLQLIGRAFDEETLLRIGDAYQRVTDWHTRMPDLPVE</sequence>
<evidence type="ECO:0000255" key="1">
    <source>
        <dbReference type="HAMAP-Rule" id="MF_00120"/>
    </source>
</evidence>
<keyword id="KW-0067">ATP-binding</keyword>
<keyword id="KW-0436">Ligase</keyword>
<keyword id="KW-0547">Nucleotide-binding</keyword>
<keyword id="KW-0648">Protein biosynthesis</keyword>
<proteinExistence type="inferred from homology"/>
<feature type="chain" id="PRO_1000203045" description="Glutamyl-tRNA(Gln) amidotransferase subunit A">
    <location>
        <begin position="1"/>
        <end position="487"/>
    </location>
</feature>
<feature type="active site" description="Charge relay system" evidence="1">
    <location>
        <position position="79"/>
    </location>
</feature>
<feature type="active site" description="Charge relay system" evidence="1">
    <location>
        <position position="154"/>
    </location>
</feature>
<feature type="active site" description="Acyl-ester intermediate" evidence="1">
    <location>
        <position position="178"/>
    </location>
</feature>
<gene>
    <name evidence="1" type="primary">gatA</name>
    <name type="ordered locus">RoseRS_2947</name>
</gene>
<reference key="1">
    <citation type="submission" date="2007-04" db="EMBL/GenBank/DDBJ databases">
        <title>Complete sequence of Roseiflexus sp. RS-1.</title>
        <authorList>
            <consortium name="US DOE Joint Genome Institute"/>
            <person name="Copeland A."/>
            <person name="Lucas S."/>
            <person name="Lapidus A."/>
            <person name="Barry K."/>
            <person name="Detter J.C."/>
            <person name="Glavina del Rio T."/>
            <person name="Hammon N."/>
            <person name="Israni S."/>
            <person name="Dalin E."/>
            <person name="Tice H."/>
            <person name="Pitluck S."/>
            <person name="Chertkov O."/>
            <person name="Brettin T."/>
            <person name="Bruce D."/>
            <person name="Han C."/>
            <person name="Schmutz J."/>
            <person name="Larimer F."/>
            <person name="Land M."/>
            <person name="Hauser L."/>
            <person name="Kyrpides N."/>
            <person name="Mikhailova N."/>
            <person name="Bryant D.A."/>
            <person name="Richardson P."/>
        </authorList>
    </citation>
    <scope>NUCLEOTIDE SEQUENCE [LARGE SCALE GENOMIC DNA]</scope>
    <source>
        <strain>RS-1</strain>
    </source>
</reference>
<comment type="function">
    <text evidence="1">Allows the formation of correctly charged Gln-tRNA(Gln) through the transamidation of misacylated Glu-tRNA(Gln) in organisms which lack glutaminyl-tRNA synthetase. The reaction takes place in the presence of glutamine and ATP through an activated gamma-phospho-Glu-tRNA(Gln).</text>
</comment>
<comment type="catalytic activity">
    <reaction evidence="1">
        <text>L-glutamyl-tRNA(Gln) + L-glutamine + ATP + H2O = L-glutaminyl-tRNA(Gln) + L-glutamate + ADP + phosphate + H(+)</text>
        <dbReference type="Rhea" id="RHEA:17521"/>
        <dbReference type="Rhea" id="RHEA-COMP:9681"/>
        <dbReference type="Rhea" id="RHEA-COMP:9684"/>
        <dbReference type="ChEBI" id="CHEBI:15377"/>
        <dbReference type="ChEBI" id="CHEBI:15378"/>
        <dbReference type="ChEBI" id="CHEBI:29985"/>
        <dbReference type="ChEBI" id="CHEBI:30616"/>
        <dbReference type="ChEBI" id="CHEBI:43474"/>
        <dbReference type="ChEBI" id="CHEBI:58359"/>
        <dbReference type="ChEBI" id="CHEBI:78520"/>
        <dbReference type="ChEBI" id="CHEBI:78521"/>
        <dbReference type="ChEBI" id="CHEBI:456216"/>
        <dbReference type="EC" id="6.3.5.7"/>
    </reaction>
</comment>
<comment type="subunit">
    <text evidence="1">Heterotrimer of A, B and C subunits.</text>
</comment>
<comment type="similarity">
    <text evidence="1">Belongs to the amidase family. GatA subfamily.</text>
</comment>
<organism>
    <name type="scientific">Roseiflexus sp. (strain RS-1)</name>
    <dbReference type="NCBI Taxonomy" id="357808"/>
    <lineage>
        <taxon>Bacteria</taxon>
        <taxon>Bacillati</taxon>
        <taxon>Chloroflexota</taxon>
        <taxon>Chloroflexia</taxon>
        <taxon>Chloroflexales</taxon>
        <taxon>Roseiflexineae</taxon>
        <taxon>Roseiflexaceae</taxon>
        <taxon>Roseiflexus</taxon>
    </lineage>
</organism>
<accession>A5UXF9</accession>